<proteinExistence type="inferred from homology"/>
<comment type="function">
    <text evidence="1">Catalyzes the formation of pyridoxal 5'-phosphate from ribose 5-phosphate (RBP), glyceraldehyde 3-phosphate (G3P) and ammonia. The ammonia is provided by the PdxT subunit. Can also use ribulose 5-phosphate and dihydroxyacetone phosphate as substrates, resulting from enzyme-catalyzed isomerization of RBP and G3P, respectively.</text>
</comment>
<comment type="catalytic activity">
    <reaction evidence="1">
        <text>aldehydo-D-ribose 5-phosphate + D-glyceraldehyde 3-phosphate + L-glutamine = pyridoxal 5'-phosphate + L-glutamate + phosphate + 3 H2O + H(+)</text>
        <dbReference type="Rhea" id="RHEA:31507"/>
        <dbReference type="ChEBI" id="CHEBI:15377"/>
        <dbReference type="ChEBI" id="CHEBI:15378"/>
        <dbReference type="ChEBI" id="CHEBI:29985"/>
        <dbReference type="ChEBI" id="CHEBI:43474"/>
        <dbReference type="ChEBI" id="CHEBI:58273"/>
        <dbReference type="ChEBI" id="CHEBI:58359"/>
        <dbReference type="ChEBI" id="CHEBI:59776"/>
        <dbReference type="ChEBI" id="CHEBI:597326"/>
        <dbReference type="EC" id="4.3.3.6"/>
    </reaction>
</comment>
<comment type="pathway">
    <text evidence="1">Cofactor biosynthesis; pyridoxal 5'-phosphate biosynthesis.</text>
</comment>
<comment type="subunit">
    <text evidence="1">In the presence of PdxT, forms a dodecamer of heterodimers.</text>
</comment>
<comment type="similarity">
    <text evidence="1">Belongs to the PdxS/SNZ family.</text>
</comment>
<sequence>MDSAAQSNQAQSVFGQTGTARVKRGMAEMLKGGVIMDVVIPEQARIAEGSGAVAVMALERVPSDIRAQGGVSRMSDPDMIESIIAAVTIPVMAKARIGHFVEAQILQSLGVDYIDESEVLTPADYTHHIDKWKFTVPFVCGATNLGEALRRINEGAAMIRSKGEAGTGDVSNATTHMRAIAGDIRRLTSLSEDELYVAAKELHAPYELVIEVARTNKLPVTLFTAGGIATPADAAMMMQLGAEGIFVGSGIFKSSDPAQRAAAIVKATTFYDDPDVLAKVSRGLGEAMAGIDVEQIAQPDRLAQRGW</sequence>
<dbReference type="EC" id="4.3.3.6" evidence="1"/>
<dbReference type="EMBL" id="FM211192">
    <property type="protein sequence ID" value="CAR70543.1"/>
    <property type="molecule type" value="Genomic_DNA"/>
</dbReference>
<dbReference type="SMR" id="B8ZUG3"/>
<dbReference type="KEGG" id="mlb:MLBr00450"/>
<dbReference type="HOGENOM" id="CLU_055352_1_0_11"/>
<dbReference type="UniPathway" id="UPA00245"/>
<dbReference type="Proteomes" id="UP000006900">
    <property type="component" value="Chromosome"/>
</dbReference>
<dbReference type="GO" id="GO:0036381">
    <property type="term" value="F:pyridoxal 5'-phosphate synthase (glutamine hydrolysing) activity"/>
    <property type="evidence" value="ECO:0007669"/>
    <property type="project" value="UniProtKB-UniRule"/>
</dbReference>
<dbReference type="GO" id="GO:0006520">
    <property type="term" value="P:amino acid metabolic process"/>
    <property type="evidence" value="ECO:0007669"/>
    <property type="project" value="TreeGrafter"/>
</dbReference>
<dbReference type="GO" id="GO:0042823">
    <property type="term" value="P:pyridoxal phosphate biosynthetic process"/>
    <property type="evidence" value="ECO:0007669"/>
    <property type="project" value="UniProtKB-UniRule"/>
</dbReference>
<dbReference type="GO" id="GO:0008615">
    <property type="term" value="P:pyridoxine biosynthetic process"/>
    <property type="evidence" value="ECO:0007669"/>
    <property type="project" value="TreeGrafter"/>
</dbReference>
<dbReference type="CDD" id="cd04727">
    <property type="entry name" value="pdxS"/>
    <property type="match status" value="1"/>
</dbReference>
<dbReference type="FunFam" id="3.20.20.70:FF:000001">
    <property type="entry name" value="Pyridoxine biosynthesis protein PDX1"/>
    <property type="match status" value="1"/>
</dbReference>
<dbReference type="Gene3D" id="3.20.20.70">
    <property type="entry name" value="Aldolase class I"/>
    <property type="match status" value="1"/>
</dbReference>
<dbReference type="HAMAP" id="MF_01824">
    <property type="entry name" value="PdxS"/>
    <property type="match status" value="1"/>
</dbReference>
<dbReference type="InterPro" id="IPR013785">
    <property type="entry name" value="Aldolase_TIM"/>
</dbReference>
<dbReference type="InterPro" id="IPR001852">
    <property type="entry name" value="PdxS/SNZ"/>
</dbReference>
<dbReference type="InterPro" id="IPR033755">
    <property type="entry name" value="PdxS/SNZ_N"/>
</dbReference>
<dbReference type="InterPro" id="IPR011060">
    <property type="entry name" value="RibuloseP-bd_barrel"/>
</dbReference>
<dbReference type="NCBIfam" id="NF003215">
    <property type="entry name" value="PRK04180.1"/>
    <property type="match status" value="1"/>
</dbReference>
<dbReference type="NCBIfam" id="TIGR00343">
    <property type="entry name" value="pyridoxal 5'-phosphate synthase lyase subunit PdxS"/>
    <property type="match status" value="1"/>
</dbReference>
<dbReference type="PANTHER" id="PTHR31829">
    <property type="entry name" value="PYRIDOXAL 5'-PHOSPHATE SYNTHASE SUBUNIT SNZ1-RELATED"/>
    <property type="match status" value="1"/>
</dbReference>
<dbReference type="PANTHER" id="PTHR31829:SF0">
    <property type="entry name" value="PYRIDOXAL 5'-PHOSPHATE SYNTHASE SUBUNIT SNZ1-RELATED"/>
    <property type="match status" value="1"/>
</dbReference>
<dbReference type="Pfam" id="PF01680">
    <property type="entry name" value="SOR_SNZ"/>
    <property type="match status" value="1"/>
</dbReference>
<dbReference type="PIRSF" id="PIRSF029271">
    <property type="entry name" value="Pdx1"/>
    <property type="match status" value="1"/>
</dbReference>
<dbReference type="SUPFAM" id="SSF51366">
    <property type="entry name" value="Ribulose-phoshate binding barrel"/>
    <property type="match status" value="1"/>
</dbReference>
<dbReference type="PROSITE" id="PS01235">
    <property type="entry name" value="PDXS_SNZ_1"/>
    <property type="match status" value="1"/>
</dbReference>
<dbReference type="PROSITE" id="PS51129">
    <property type="entry name" value="PDXS_SNZ_2"/>
    <property type="match status" value="1"/>
</dbReference>
<protein>
    <recommendedName>
        <fullName evidence="1">Pyridoxal 5'-phosphate synthase subunit PdxS</fullName>
        <shortName evidence="1">PLP synthase subunit PdxS</shortName>
        <ecNumber evidence="1">4.3.3.6</ecNumber>
    </recommendedName>
    <alternativeName>
        <fullName evidence="1">Pdx1</fullName>
    </alternativeName>
</protein>
<evidence type="ECO:0000255" key="1">
    <source>
        <dbReference type="HAMAP-Rule" id="MF_01824"/>
    </source>
</evidence>
<feature type="chain" id="PRO_1000188236" description="Pyridoxal 5'-phosphate synthase subunit PdxS">
    <location>
        <begin position="1"/>
        <end position="307"/>
    </location>
</feature>
<feature type="active site" description="Schiff-base intermediate with D-ribose 5-phosphate" evidence="1">
    <location>
        <position position="94"/>
    </location>
</feature>
<feature type="binding site" evidence="1">
    <location>
        <position position="37"/>
    </location>
    <ligand>
        <name>D-ribose 5-phosphate</name>
        <dbReference type="ChEBI" id="CHEBI:78346"/>
    </ligand>
</feature>
<feature type="binding site" evidence="1">
    <location>
        <position position="166"/>
    </location>
    <ligand>
        <name>D-ribose 5-phosphate</name>
        <dbReference type="ChEBI" id="CHEBI:78346"/>
    </ligand>
</feature>
<feature type="binding site" evidence="1">
    <location>
        <position position="178"/>
    </location>
    <ligand>
        <name>D-glyceraldehyde 3-phosphate</name>
        <dbReference type="ChEBI" id="CHEBI:59776"/>
    </ligand>
</feature>
<feature type="binding site" evidence="1">
    <location>
        <position position="227"/>
    </location>
    <ligand>
        <name>D-ribose 5-phosphate</name>
        <dbReference type="ChEBI" id="CHEBI:78346"/>
    </ligand>
</feature>
<feature type="binding site" evidence="1">
    <location>
        <begin position="248"/>
        <end position="249"/>
    </location>
    <ligand>
        <name>D-ribose 5-phosphate</name>
        <dbReference type="ChEBI" id="CHEBI:78346"/>
    </ligand>
</feature>
<gene>
    <name evidence="1" type="primary">pdxS</name>
    <name type="ordered locus">MLBr00450</name>
</gene>
<organism>
    <name type="scientific">Mycobacterium leprae (strain Br4923)</name>
    <dbReference type="NCBI Taxonomy" id="561304"/>
    <lineage>
        <taxon>Bacteria</taxon>
        <taxon>Bacillati</taxon>
        <taxon>Actinomycetota</taxon>
        <taxon>Actinomycetes</taxon>
        <taxon>Mycobacteriales</taxon>
        <taxon>Mycobacteriaceae</taxon>
        <taxon>Mycobacterium</taxon>
    </lineage>
</organism>
<reference key="1">
    <citation type="journal article" date="2009" name="Nat. Genet.">
        <title>Comparative genomic and phylogeographic analysis of Mycobacterium leprae.</title>
        <authorList>
            <person name="Monot M."/>
            <person name="Honore N."/>
            <person name="Garnier T."/>
            <person name="Zidane N."/>
            <person name="Sherafi D."/>
            <person name="Paniz-Mondolfi A."/>
            <person name="Matsuoka M."/>
            <person name="Taylor G.M."/>
            <person name="Donoghue H.D."/>
            <person name="Bouwman A."/>
            <person name="Mays S."/>
            <person name="Watson C."/>
            <person name="Lockwood D."/>
            <person name="Khamispour A."/>
            <person name="Dowlati Y."/>
            <person name="Jianping S."/>
            <person name="Rea T.H."/>
            <person name="Vera-Cabrera L."/>
            <person name="Stefani M.M."/>
            <person name="Banu S."/>
            <person name="Macdonald M."/>
            <person name="Sapkota B.R."/>
            <person name="Spencer J.S."/>
            <person name="Thomas J."/>
            <person name="Harshman K."/>
            <person name="Singh P."/>
            <person name="Busso P."/>
            <person name="Gattiker A."/>
            <person name="Rougemont J."/>
            <person name="Brennan P.J."/>
            <person name="Cole S.T."/>
        </authorList>
    </citation>
    <scope>NUCLEOTIDE SEQUENCE [LARGE SCALE GENOMIC DNA]</scope>
    <source>
        <strain>Br4923</strain>
    </source>
</reference>
<accession>B8ZUG3</accession>
<name>PDXS_MYCLB</name>
<keyword id="KW-0456">Lyase</keyword>
<keyword id="KW-0663">Pyridoxal phosphate</keyword>
<keyword id="KW-0704">Schiff base</keyword>